<name>ITPK1_MAIZE</name>
<reference key="1">
    <citation type="journal article" date="2003" name="Plant Physiol.">
        <title>The maize low-phytic acid mutant lpa2 is caused by mutation in an inositol phosphate kinase gene.</title>
        <authorList>
            <person name="Shi J."/>
            <person name="Wang H."/>
            <person name="Wu Y."/>
            <person name="Hazebroek J."/>
            <person name="Meeley R.B."/>
            <person name="Ertl D.S."/>
        </authorList>
    </citation>
    <scope>NUCLEOTIDE SEQUENCE [MRNA]</scope>
    <scope>FUNCTION</scope>
    <scope>CATALYTIC ACTIVITY</scope>
    <scope>TISSUE SPECIFICITY</scope>
    <scope>DISRUPTION PHENOTYPE</scope>
</reference>
<reference key="2">
    <citation type="submission" date="2015-12" db="EMBL/GenBank/DDBJ databases">
        <title>Update maize B73 reference genome by single molecule sequencing technologies.</title>
        <authorList>
            <consortium name="Maize Genome Sequencing Project"/>
            <person name="Ware D."/>
        </authorList>
    </citation>
    <scope>NUCLEOTIDE SEQUENCE [LARGE SCALE GENOMIC DNA]</scope>
    <source>
        <strain>cv. B73</strain>
        <tissue>Seedling</tissue>
    </source>
</reference>
<reference key="3">
    <citation type="journal article" date="2018" name="Nat. Genet.">
        <title>Extensive intraspecific gene order and gene structural variations between Mo17 and other maize genomes.</title>
        <authorList>
            <person name="Sun S."/>
            <person name="Zhou Y."/>
            <person name="Chen J."/>
            <person name="Shi J."/>
            <person name="Zhao H."/>
            <person name="Zhao H."/>
            <person name="Song W."/>
            <person name="Zhang M."/>
            <person name="Cui Y."/>
            <person name="Dong X."/>
            <person name="Liu H."/>
            <person name="Ma X."/>
            <person name="Jiao Y."/>
            <person name="Wang B."/>
            <person name="Wei X."/>
            <person name="Stein J.C."/>
            <person name="Glaubitz J.C."/>
            <person name="Lu F."/>
            <person name="Yu G."/>
            <person name="Liang C."/>
            <person name="Fengler K."/>
            <person name="Li B."/>
            <person name="Rafalski A."/>
            <person name="Schnable P.S."/>
            <person name="Ware D.H."/>
            <person name="Buckler E.S."/>
            <person name="Lai J."/>
        </authorList>
    </citation>
    <scope>NUCLEOTIDE SEQUENCE [LARGE SCALE GENOMIC DNA]</scope>
    <source>
        <strain>cv. Missouri 17</strain>
        <tissue>Seedling</tissue>
    </source>
</reference>
<reference key="4">
    <citation type="journal article" date="2009" name="Plant Mol. Biol.">
        <title>Insights into corn genes derived from large-scale cDNA sequencing.</title>
        <authorList>
            <person name="Alexandrov N.N."/>
            <person name="Brover V.V."/>
            <person name="Freidin S."/>
            <person name="Troukhan M.E."/>
            <person name="Tatarinova T.V."/>
            <person name="Zhang H."/>
            <person name="Swaller T.J."/>
            <person name="Lu Y.-P."/>
            <person name="Bouck J."/>
            <person name="Flavell R.B."/>
            <person name="Feldmann K.A."/>
        </authorList>
    </citation>
    <scope>NUCLEOTIDE SEQUENCE [LARGE SCALE MRNA]</scope>
</reference>
<reference key="5">
    <citation type="journal article" date="2009" name="PLoS Genet.">
        <title>Sequencing, mapping, and analysis of 27,455 maize full-length cDNAs.</title>
        <authorList>
            <person name="Soderlund C."/>
            <person name="Descour A."/>
            <person name="Kudrna D."/>
            <person name="Bomhoff M."/>
            <person name="Boyd L."/>
            <person name="Currie J."/>
            <person name="Angelova A."/>
            <person name="Collura K."/>
            <person name="Wissotski M."/>
            <person name="Ashley E."/>
            <person name="Morrow D."/>
            <person name="Fernandes J."/>
            <person name="Walbot V."/>
            <person name="Yu Y."/>
        </authorList>
    </citation>
    <scope>NUCLEOTIDE SEQUENCE [LARGE SCALE MRNA]</scope>
    <source>
        <strain>cv. B73</strain>
    </source>
</reference>
<reference key="6">
    <citation type="journal article" date="2020" name="3 Biotech.">
        <title>Development and validation of breeder-friendly gene-based markers for lpa1-1 and lpa2-1 genes conferring low phytic acid in maize kernel.</title>
        <authorList>
            <person name="Abhijith K.P."/>
            <person name="Muthusamy V."/>
            <person name="Chhabra R."/>
            <person name="Dosad S."/>
            <person name="Bhatt V."/>
            <person name="Chand G."/>
            <person name="Jaiswal S.K."/>
            <person name="Zunjare R.U."/>
            <person name="Vasudev S."/>
            <person name="Yadava D.K."/>
            <person name="Hossain F."/>
        </authorList>
    </citation>
    <scope>NUCLEOTIDE SEQUENCE [GENOMIC DNA] OF 7-342</scope>
    <scope>FUNCTION</scope>
    <source>
        <strain>cv. A619lpa2-1</strain>
        <strain>cv. HKI1105Q</strain>
        <strain>cv. HKI1128Q</strain>
        <strain>cv. HKI161PV</strain>
        <strain>cv. HKI163PV</strain>
        <strain>cv. HKI193-1PV</strain>
        <strain>cv. HKI193-2PV</strain>
        <strain>cv. HKI323Q</strain>
    </source>
</reference>
<reference key="7">
    <citation type="journal article" date="2022" name="FASEB J.">
        <title>Structural and catalytic analyses of the InsP6 kinase activities of higher plant ITPKs.</title>
        <authorList>
            <person name="Zong G."/>
            <person name="Shears S.B."/>
            <person name="Wang H."/>
        </authorList>
    </citation>
    <scope>X-RAY CRYSTALLOGRAPHY (2.25 ANGSTROMS) IN COMPLEX WITH INSP6</scope>
    <scope>FUNCTION</scope>
    <scope>MUTAGENESIS OF LYS-29; SER-32; LYS-70; PHE-189; HIS-192; LYS-198; TYR-200; ARG-211; 219-PRO--TYR-247; ASN-280 AND LYS-306</scope>
    <scope>BIOPHYSICOCHEMICAL PROPERTIES</scope>
    <scope>CATALYTIC ACTIVITY</scope>
</reference>
<evidence type="ECO:0000250" key="1">
    <source>
        <dbReference type="UniProtKB" id="Q13572"/>
    </source>
</evidence>
<evidence type="ECO:0000250" key="2">
    <source>
        <dbReference type="UniProtKB" id="Q9XYQ1"/>
    </source>
</evidence>
<evidence type="ECO:0000255" key="3"/>
<evidence type="ECO:0000269" key="4">
    <source>
    </source>
</evidence>
<evidence type="ECO:0000269" key="5">
    <source>
    </source>
</evidence>
<evidence type="ECO:0000269" key="6">
    <source>
    </source>
</evidence>
<evidence type="ECO:0000303" key="7">
    <source>
    </source>
</evidence>
<evidence type="ECO:0000303" key="8">
    <source>
    </source>
</evidence>
<evidence type="ECO:0000303" key="9">
    <source>
    </source>
</evidence>
<evidence type="ECO:0000305" key="10"/>
<evidence type="ECO:0000305" key="11">
    <source>
    </source>
</evidence>
<evidence type="ECO:0000312" key="12">
    <source>
        <dbReference type="EMBL" id="ONM00141.1"/>
    </source>
</evidence>
<evidence type="ECO:0000312" key="13">
    <source>
        <dbReference type="EMBL" id="PWZ54614.1"/>
    </source>
</evidence>
<evidence type="ECO:0007744" key="14">
    <source>
        <dbReference type="PDB" id="7TN8"/>
    </source>
</evidence>
<evidence type="ECO:0007829" key="15">
    <source>
        <dbReference type="PDB" id="7TN7"/>
    </source>
</evidence>
<evidence type="ECO:0007829" key="16">
    <source>
        <dbReference type="PDB" id="7TN8"/>
    </source>
</evidence>
<comment type="function">
    <text evidence="4 5 6">Kinase that can phosphorylate various inositol polyphosphate such as Ins(3,4,5,6)P4 or Ins(1,3,4)P3 and participates in phytic acid biosynthesis in developing seeds (PubMed:12586875, PubMed:32123645). Phosphorylates Ins(3,4,5,6)P4 at position 1 to form Ins(1,3,4,5,6)P5. This reaction is thought to have regulatory importance, since Ins(3,4,5,6)P4 is an inhibitor of plasma membrane Ca(2+)-activated Cl(-) channels, while Ins(1,3,4,5,6)P5 is not (PubMed:12586875). Also phosphorylates Ins(1,3,4)P3 on O-5 and O-6 to form Ins(1,3,4,6)P4, an essential molecule in the hexakisphosphate (InsP6) pathway (PubMed:12586875). Also able to phosphorylate Ins(3,5,6)P3 but not Ins(1,4,5)P3, Ins(2,4,5)P3, Ins(1,3,4,6)P4 nor Ins(1,3,5,6)P4. Has higher specific activity on Ins(3,4,5,6)P4 than Ins(1,3,4)P3 and Ins(3,5,6)P3 (PubMed:12586875). Can also could use Ins(1,2,5,6)P4 as a substrate (PubMed:12586875). Able to add a beta-phosphate to the 3 positions of Ins(1,2,3,4,5)P5 and to add beta-phosphate to InsP6 to yield 5-InsP7, thus exhibiting InsP6 kinase activity (PubMed:35635723). Also has Ins(1,3,4,5,6)P5 phosphatase activity (PubMed:35635723).</text>
</comment>
<comment type="catalytic activity">
    <reaction evidence="4 6">
        <text>1D-myo-inositol 3,4,5,6-tetrakisphosphate + ATP = 1D-myo-inositol 1,3,4,5,6-pentakisphosphate + ADP + H(+)</text>
        <dbReference type="Rhea" id="RHEA:12452"/>
        <dbReference type="ChEBI" id="CHEBI:15378"/>
        <dbReference type="ChEBI" id="CHEBI:30616"/>
        <dbReference type="ChEBI" id="CHEBI:57539"/>
        <dbReference type="ChEBI" id="CHEBI:57733"/>
        <dbReference type="ChEBI" id="CHEBI:456216"/>
        <dbReference type="EC" id="2.7.1.134"/>
    </reaction>
    <physiologicalReaction direction="left-to-right" evidence="4">
        <dbReference type="Rhea" id="RHEA:12453"/>
    </physiologicalReaction>
    <physiologicalReaction direction="right-to-left" evidence="6">
        <dbReference type="Rhea" id="RHEA:12454"/>
    </physiologicalReaction>
</comment>
<comment type="catalytic activity">
    <reaction evidence="4">
        <text>1D-myo-inositol 1,3,4-trisphosphate + ATP = 1D-myo-inositol 1,3,4,5-tetrakisphosphate + ADP + H(+)</text>
        <dbReference type="Rhea" id="RHEA:13253"/>
        <dbReference type="ChEBI" id="CHEBI:15378"/>
        <dbReference type="ChEBI" id="CHEBI:30616"/>
        <dbReference type="ChEBI" id="CHEBI:57895"/>
        <dbReference type="ChEBI" id="CHEBI:58414"/>
        <dbReference type="ChEBI" id="CHEBI:456216"/>
        <dbReference type="EC" id="2.7.1.159"/>
    </reaction>
</comment>
<comment type="catalytic activity">
    <reaction evidence="4">
        <text>1D-myo-inositol 1,3,4-trisphosphate + ATP = 1D-myo-inositol 1,3,4,6-tetrakisphosphate + ADP + H(+)</text>
        <dbReference type="Rhea" id="RHEA:20940"/>
        <dbReference type="ChEBI" id="CHEBI:15378"/>
        <dbReference type="ChEBI" id="CHEBI:30616"/>
        <dbReference type="ChEBI" id="CHEBI:57660"/>
        <dbReference type="ChEBI" id="CHEBI:58414"/>
        <dbReference type="ChEBI" id="CHEBI:456216"/>
        <dbReference type="EC" id="2.7.1.159"/>
    </reaction>
</comment>
<comment type="catalytic activity">
    <reaction evidence="6">
        <text>1D-myo-inositol 1,2,3,4,5-pentakisphosphate + ATP = 3-diphospho-1D-myo-inositol 1,2,4,5-tetrakisphosphate + ADP</text>
        <dbReference type="Rhea" id="RHEA:74847"/>
        <dbReference type="ChEBI" id="CHEBI:30616"/>
        <dbReference type="ChEBI" id="CHEBI:177294"/>
        <dbReference type="ChEBI" id="CHEBI:194087"/>
        <dbReference type="ChEBI" id="CHEBI:456216"/>
    </reaction>
    <physiologicalReaction direction="left-to-right" evidence="6">
        <dbReference type="Rhea" id="RHEA:74848"/>
    </physiologicalReaction>
</comment>
<comment type="catalytic activity">
    <reaction evidence="6">
        <text>1D-myo-inositol hexakisphosphate + ATP = 5-diphospho-1D-myo-inositol 1,2,3,4,6-pentakisphosphate + ADP</text>
        <dbReference type="Rhea" id="RHEA:12793"/>
        <dbReference type="ChEBI" id="CHEBI:30616"/>
        <dbReference type="ChEBI" id="CHEBI:58130"/>
        <dbReference type="ChEBI" id="CHEBI:58628"/>
        <dbReference type="ChEBI" id="CHEBI:456216"/>
        <dbReference type="EC" id="2.7.4.21"/>
    </reaction>
    <physiologicalReaction direction="left-to-right" evidence="6">
        <dbReference type="Rhea" id="RHEA:12794"/>
    </physiologicalReaction>
</comment>
<comment type="cofactor">
    <cofactor evidence="1">
        <name>Mg(2+)</name>
        <dbReference type="ChEBI" id="CHEBI:18420"/>
    </cofactor>
    <text evidence="1">Binds 2 magnesium ions per subunit.</text>
</comment>
<comment type="biophysicochemical properties">
    <kinetics>
        <KM evidence="6">364 uM for ATP</KM>
        <KM evidence="6">25 uM for InsP6</KM>
        <KM evidence="6">10 uM for Ins(1.2.3.4.5)P5</KM>
        <Vmax evidence="6">5.1 pmol/min/nmol enzyme with Ins(2,3,4,5,6)P5 as substrate</Vmax>
        <Vmax evidence="6">9.1 pmol/min/nmol enzyme with Ins(1,3,4,5,6)P5 as substrate</Vmax>
        <Vmax evidence="6">6.1 pmol/min/nmol enzyme with Ins(1,2,4,5,6)P5 as substrate</Vmax>
        <Vmax evidence="6">2.2 pmol/min/nmol enzyme with Ins(1,2,3,5,6)P5 as substrate</Vmax>
        <Vmax evidence="6">3.7 pmol/min/nmol enzyme with Ins(1,2,3,4,6)P5 as substrate</Vmax>
        <Vmax evidence="6">134.0 pmol/min/nmol enzyme with Ins(1,2,3,4,5)P5 as substrate</Vmax>
    </kinetics>
</comment>
<comment type="subunit">
    <text evidence="1">Monomer.</text>
</comment>
<comment type="tissue specificity">
    <text evidence="4">Expressed in the embryo of 15 day after pollination. Expressed in kernels at earlier stages but at very low levels. Expression in the embryo peaks at 15 days after pollination and then declines. No expression is detected from endosperm and vegetative tissues.</text>
</comment>
<comment type="disruption phenotype">
    <text evidence="4">Plants display reduced phytic acid content in seeds.</text>
</comment>
<comment type="similarity">
    <text evidence="10">Belongs to the ITPK1 family.</text>
</comment>
<comment type="sequence caution" evidence="10">
    <conflict type="erroneous initiation">
        <sequence resource="EMBL-CDS" id="ACR36742"/>
    </conflict>
    <text>Truncated N-terminus.</text>
</comment>
<gene>
    <name evidence="7" type="primary">ITPK1</name>
    <name evidence="7" type="synonym">LPA2</name>
    <name evidence="8" type="synonym">lpa2-1</name>
    <name evidence="12" type="ORF">ZEAMMB73_Zm00001d030083</name>
    <name evidence="13" type="ORF">Zm00014a_003941</name>
</gene>
<organism>
    <name type="scientific">Zea mays</name>
    <name type="common">Maize</name>
    <dbReference type="NCBI Taxonomy" id="4577"/>
    <lineage>
        <taxon>Eukaryota</taxon>
        <taxon>Viridiplantae</taxon>
        <taxon>Streptophyta</taxon>
        <taxon>Embryophyta</taxon>
        <taxon>Tracheophyta</taxon>
        <taxon>Spermatophyta</taxon>
        <taxon>Magnoliopsida</taxon>
        <taxon>Liliopsida</taxon>
        <taxon>Poales</taxon>
        <taxon>Poaceae</taxon>
        <taxon>PACMAD clade</taxon>
        <taxon>Panicoideae</taxon>
        <taxon>Andropogonodae</taxon>
        <taxon>Andropogoneae</taxon>
        <taxon>Tripsacinae</taxon>
        <taxon>Zea</taxon>
    </lineage>
</organism>
<keyword id="KW-0002">3D-structure</keyword>
<keyword id="KW-0067">ATP-binding</keyword>
<keyword id="KW-0418">Kinase</keyword>
<keyword id="KW-0460">Magnesium</keyword>
<keyword id="KW-0479">Metal-binding</keyword>
<keyword id="KW-0547">Nucleotide-binding</keyword>
<keyword id="KW-1185">Reference proteome</keyword>
<keyword id="KW-0808">Transferase</keyword>
<proteinExistence type="evidence at protein level"/>
<dbReference type="EC" id="2.7.1.134" evidence="4"/>
<dbReference type="EC" id="2.7.1.159" evidence="4"/>
<dbReference type="EC" id="2.7.4.21" evidence="6"/>
<dbReference type="EMBL" id="AY172635">
    <property type="protein sequence ID" value="AAO17299.1"/>
    <property type="molecule type" value="mRNA"/>
</dbReference>
<dbReference type="EMBL" id="CM007647">
    <property type="protein sequence ID" value="ONM00141.1"/>
    <property type="molecule type" value="Genomic_DNA"/>
</dbReference>
<dbReference type="EMBL" id="NCVQ01000001">
    <property type="protein sequence ID" value="PWZ54614.1"/>
    <property type="molecule type" value="Genomic_DNA"/>
</dbReference>
<dbReference type="EMBL" id="EU965009">
    <property type="protein sequence ID" value="ACG37127.1"/>
    <property type="molecule type" value="mRNA"/>
</dbReference>
<dbReference type="EMBL" id="BT062917">
    <property type="protein sequence ID" value="ACN27614.1"/>
    <property type="molecule type" value="mRNA"/>
</dbReference>
<dbReference type="EMBL" id="BT086389">
    <property type="protein sequence ID" value="ACR36742.1"/>
    <property type="status" value="ALT_INIT"/>
    <property type="molecule type" value="mRNA"/>
</dbReference>
<dbReference type="EMBL" id="MN917647">
    <property type="protein sequence ID" value="QIQ08754.1"/>
    <property type="molecule type" value="Genomic_DNA"/>
</dbReference>
<dbReference type="EMBL" id="MN917654">
    <property type="protein sequence ID" value="QIQ08761.1"/>
    <property type="molecule type" value="Genomic_DNA"/>
</dbReference>
<dbReference type="EMBL" id="MN917648">
    <property type="protein sequence ID" value="QIQ08755.1"/>
    <property type="molecule type" value="Genomic_DNA"/>
</dbReference>
<dbReference type="EMBL" id="MN917649">
    <property type="protein sequence ID" value="QIQ08756.1"/>
    <property type="molecule type" value="Genomic_DNA"/>
</dbReference>
<dbReference type="EMBL" id="MN917650">
    <property type="protein sequence ID" value="QIQ08757.1"/>
    <property type="molecule type" value="Genomic_DNA"/>
</dbReference>
<dbReference type="EMBL" id="MN917651">
    <property type="protein sequence ID" value="QIQ08758.1"/>
    <property type="molecule type" value="Genomic_DNA"/>
</dbReference>
<dbReference type="EMBL" id="MN917652">
    <property type="protein sequence ID" value="QIQ08759.1"/>
    <property type="molecule type" value="Genomic_DNA"/>
</dbReference>
<dbReference type="EMBL" id="MN917653">
    <property type="protein sequence ID" value="QIQ08760.1"/>
    <property type="molecule type" value="Genomic_DNA"/>
</dbReference>
<dbReference type="RefSeq" id="NP_001105901.1">
    <property type="nucleotide sequence ID" value="NM_001112431.1"/>
</dbReference>
<dbReference type="PDB" id="7TN3">
    <property type="method" value="X-ray"/>
    <property type="resolution" value="2.90 A"/>
    <property type="chains" value="A=1-342"/>
</dbReference>
<dbReference type="PDB" id="7TN5">
    <property type="method" value="X-ray"/>
    <property type="resolution" value="2.90 A"/>
    <property type="chains" value="A=1-342"/>
</dbReference>
<dbReference type="PDB" id="7TN6">
    <property type="method" value="X-ray"/>
    <property type="resolution" value="2.85 A"/>
    <property type="chains" value="A=1-342"/>
</dbReference>
<dbReference type="PDB" id="7TN7">
    <property type="method" value="X-ray"/>
    <property type="resolution" value="2.25 A"/>
    <property type="chains" value="A=1-342"/>
</dbReference>
<dbReference type="PDB" id="7TN8">
    <property type="method" value="X-ray"/>
    <property type="resolution" value="2.60 A"/>
    <property type="chains" value="A=1-342"/>
</dbReference>
<dbReference type="PDBsum" id="7TN3"/>
<dbReference type="PDBsum" id="7TN5"/>
<dbReference type="PDBsum" id="7TN6"/>
<dbReference type="PDBsum" id="7TN7"/>
<dbReference type="PDBsum" id="7TN8"/>
<dbReference type="SMR" id="Q84Y01"/>
<dbReference type="FunCoup" id="Q84Y01">
    <property type="interactions" value="1485"/>
</dbReference>
<dbReference type="IntAct" id="Q84Y01">
    <property type="interactions" value="1"/>
</dbReference>
<dbReference type="STRING" id="4577.Q84Y01"/>
<dbReference type="PaxDb" id="4577-GRMZM2G456626_P01"/>
<dbReference type="EnsemblPlants" id="Zm00001eb024800_T001">
    <property type="protein sequence ID" value="Zm00001eb024800_P001"/>
    <property type="gene ID" value="Zm00001eb024800"/>
</dbReference>
<dbReference type="GeneID" id="732818"/>
<dbReference type="Gramene" id="Zm00001eb024800_T001">
    <property type="protein sequence ID" value="Zm00001eb024800_P001"/>
    <property type="gene ID" value="Zm00001eb024800"/>
</dbReference>
<dbReference type="KEGG" id="zma:732818"/>
<dbReference type="MaizeGDB" id="301214"/>
<dbReference type="eggNOG" id="ENOG502QQS1">
    <property type="taxonomic scope" value="Eukaryota"/>
</dbReference>
<dbReference type="HOGENOM" id="CLU_041857_0_0_1"/>
<dbReference type="InParanoid" id="Q84Y01"/>
<dbReference type="OMA" id="ESCSHLT"/>
<dbReference type="OrthoDB" id="25308at2759"/>
<dbReference type="Proteomes" id="UP000007305">
    <property type="component" value="Chromosome 1"/>
</dbReference>
<dbReference type="Proteomes" id="UP000251960">
    <property type="component" value="Chromosome 1"/>
</dbReference>
<dbReference type="ExpressionAtlas" id="Q84Y01">
    <property type="expression patterns" value="baseline and differential"/>
</dbReference>
<dbReference type="GO" id="GO:0005524">
    <property type="term" value="F:ATP binding"/>
    <property type="evidence" value="ECO:0000305"/>
    <property type="project" value="AgBase"/>
</dbReference>
<dbReference type="GO" id="GO:0000832">
    <property type="term" value="F:inositol hexakisphosphate 5-kinase activity"/>
    <property type="evidence" value="ECO:0007669"/>
    <property type="project" value="RHEA"/>
</dbReference>
<dbReference type="GO" id="GO:0051717">
    <property type="term" value="F:inositol-1,3,4,5-tetrakisphosphate 3-phosphatase activity"/>
    <property type="evidence" value="ECO:0000304"/>
    <property type="project" value="AgBase"/>
</dbReference>
<dbReference type="GO" id="GO:0000825">
    <property type="term" value="F:inositol-1,3,4,5-tetrakisphosphate 6-kinase activity"/>
    <property type="evidence" value="ECO:0000314"/>
    <property type="project" value="AgBase"/>
</dbReference>
<dbReference type="GO" id="GO:0052726">
    <property type="term" value="F:inositol-1,3,4-trisphosphate 5-kinase activity"/>
    <property type="evidence" value="ECO:0000314"/>
    <property type="project" value="UniProtKB"/>
</dbReference>
<dbReference type="GO" id="GO:0052725">
    <property type="term" value="F:inositol-1,3,4-trisphosphate 6-kinase activity"/>
    <property type="evidence" value="ECO:0000314"/>
    <property type="project" value="UniProtKB"/>
</dbReference>
<dbReference type="GO" id="GO:0047325">
    <property type="term" value="F:inositol-3,4,5,6-tetrakisphosphate 1-kinase activity"/>
    <property type="evidence" value="ECO:0000314"/>
    <property type="project" value="UniProtKB"/>
</dbReference>
<dbReference type="GO" id="GO:0000287">
    <property type="term" value="F:magnesium ion binding"/>
    <property type="evidence" value="ECO:0007669"/>
    <property type="project" value="InterPro"/>
</dbReference>
<dbReference type="GO" id="GO:0032957">
    <property type="term" value="P:inositol trisphosphate metabolic process"/>
    <property type="evidence" value="ECO:0007669"/>
    <property type="project" value="InterPro"/>
</dbReference>
<dbReference type="GO" id="GO:0010264">
    <property type="term" value="P:myo-inositol hexakisphosphate biosynthetic process"/>
    <property type="evidence" value="ECO:0000315"/>
    <property type="project" value="UniProtKB"/>
</dbReference>
<dbReference type="GO" id="GO:0048316">
    <property type="term" value="P:seed development"/>
    <property type="evidence" value="ECO:0000315"/>
    <property type="project" value="AgBase"/>
</dbReference>
<dbReference type="FunFam" id="3.30.470.20:FF:000056">
    <property type="entry name" value="Inositol-tetrakisphosphate 1-kinase"/>
    <property type="match status" value="1"/>
</dbReference>
<dbReference type="Gene3D" id="3.30.470.20">
    <property type="entry name" value="ATP-grasp fold, B domain"/>
    <property type="match status" value="1"/>
</dbReference>
<dbReference type="InterPro" id="IPR008656">
    <property type="entry name" value="Inositol_tetrakis-P_1-kinase"/>
</dbReference>
<dbReference type="InterPro" id="IPR040464">
    <property type="entry name" value="InsP(3)kin_ATP-grasp"/>
</dbReference>
<dbReference type="InterPro" id="IPR041429">
    <property type="entry name" value="ITPK1_N"/>
</dbReference>
<dbReference type="PANTHER" id="PTHR14217">
    <property type="entry name" value="INOSITOL-TETRAKISPHOSPHATE 1-KINASE"/>
    <property type="match status" value="1"/>
</dbReference>
<dbReference type="PANTHER" id="PTHR14217:SF24">
    <property type="entry name" value="INOSITOL-TETRAKISPHOSPHATE 1-KINASE 1"/>
    <property type="match status" value="1"/>
</dbReference>
<dbReference type="Pfam" id="PF05770">
    <property type="entry name" value="Ins134_P3_kin"/>
    <property type="match status" value="1"/>
</dbReference>
<dbReference type="Pfam" id="PF17927">
    <property type="entry name" value="Ins134_P3_kin_N"/>
    <property type="match status" value="1"/>
</dbReference>
<dbReference type="PIRSF" id="PIRSF038186">
    <property type="entry name" value="ITPK"/>
    <property type="match status" value="1"/>
</dbReference>
<dbReference type="SUPFAM" id="SSF56059">
    <property type="entry name" value="Glutathione synthetase ATP-binding domain-like"/>
    <property type="match status" value="1"/>
</dbReference>
<protein>
    <recommendedName>
        <fullName evidence="7">Inositol-tetrakisphosphate 1-kinase 1</fullName>
        <shortName evidence="9">ZmITPK1</shortName>
        <shortName evidence="7">ZmIpk</shortName>
        <ecNumber evidence="4">2.7.1.134</ecNumber>
    </recommendedName>
    <alternativeName>
        <fullName evidence="7">Inositol 1,3,4-trisphosphate 5/6-kinase 1</fullName>
        <shortName evidence="7">Inositol-triphosphate 5/6-kinase 1</shortName>
        <shortName evidence="7">Ins(1,3,4)P(3) 5/6-kinase 1</shortName>
        <ecNumber evidence="4">2.7.1.159</ecNumber>
    </alternativeName>
    <alternativeName>
        <fullName evidence="11">Inositol-hexakisphosphate 5-kinase</fullName>
        <ecNumber evidence="6">2.7.4.21</ecNumber>
    </alternativeName>
    <alternativeName>
        <fullName evidence="7">Low phytic acid protein 2</fullName>
    </alternativeName>
</protein>
<accession>Q84Y01</accession>
<accession>A0A317YA49</accession>
<accession>A0A6G9HEY5</accession>
<accession>A0A8J8YPX8</accession>
<accession>B6TJ44</accession>
<accession>C0P3P8</accession>
<accession>C4J6E2</accession>
<sequence>MASDAAAEPSSGVTHPPRYVIGYALAPKKQQSFIQPSLVAQAASRGMDLVPVDASQPLAEQGPFHLLIHKLYGDDWRAQLVAFAARHPAVPIVDPPHAIDRLHNRISMLQVVSELDHAADQDSTFGIPSQVVVYDAAALADFGLLAALRFPLIAKPLVADGTAKSHKMSLVYHREGLGKLRPPLVLQEFVNHGGVIFKVYVVGGHVTCVKRRSLPDVSPEDDASAQGSVSFSQVSNLPTERTAEEYYGEKSLEDAVVPPAAFINQIAGGLRRALGLQLFNFDMIRDVRAGDRYLVIDINYFPGYAKMPGYETVLTDFFWEMVHKDGVGNQQEEKGANHVVVK</sequence>
<feature type="chain" id="PRO_0000220843" description="Inositol-tetrakisphosphate 1-kinase 1">
    <location>
        <begin position="1"/>
        <end position="342"/>
    </location>
</feature>
<feature type="domain" description="ATP-grasp" evidence="3">
    <location>
        <begin position="116"/>
        <end position="332"/>
    </location>
</feature>
<feature type="region of interest" description="Catalytic specificity elements (CSE)" evidence="11">
    <location>
        <begin position="219"/>
        <end position="247"/>
    </location>
</feature>
<feature type="binding site" evidence="2">
    <location>
        <position position="28"/>
    </location>
    <ligand>
        <name>1D-myo-inositol 6-phosphate</name>
        <dbReference type="ChEBI" id="CHEBI:64841"/>
    </ligand>
</feature>
<feature type="binding site" evidence="2">
    <location>
        <position position="70"/>
    </location>
    <ligand>
        <name>1D-myo-inositol 6-phosphate</name>
        <dbReference type="ChEBI" id="CHEBI:64841"/>
    </ligand>
</feature>
<feature type="binding site" evidence="1">
    <location>
        <position position="105"/>
    </location>
    <ligand>
        <name>ATP</name>
        <dbReference type="ChEBI" id="CHEBI:30616"/>
    </ligand>
</feature>
<feature type="binding site" evidence="1">
    <location>
        <position position="155"/>
    </location>
    <ligand>
        <name>ATP</name>
        <dbReference type="ChEBI" id="CHEBI:30616"/>
    </ligand>
</feature>
<feature type="binding site" evidence="2">
    <location>
        <position position="161"/>
    </location>
    <ligand>
        <name>1D-myo-inositol 6-phosphate</name>
        <dbReference type="ChEBI" id="CHEBI:64841"/>
    </ligand>
</feature>
<feature type="binding site" evidence="2">
    <location>
        <position position="166"/>
    </location>
    <ligand>
        <name>1D-myo-inositol 6-phosphate</name>
        <dbReference type="ChEBI" id="CHEBI:64841"/>
    </ligand>
</feature>
<feature type="binding site" evidence="2">
    <location>
        <position position="166"/>
    </location>
    <ligand>
        <name>ATP</name>
        <dbReference type="ChEBI" id="CHEBI:30616"/>
    </ligand>
</feature>
<feature type="binding site" evidence="2">
    <location>
        <position position="187"/>
    </location>
    <ligand>
        <name>ATP</name>
        <dbReference type="ChEBI" id="CHEBI:30616"/>
    </ligand>
</feature>
<feature type="binding site" evidence="2">
    <location>
        <position position="190"/>
    </location>
    <ligand>
        <name>ATP</name>
        <dbReference type="ChEBI" id="CHEBI:30616"/>
    </ligand>
</feature>
<feature type="binding site" evidence="11 14">
    <location>
        <position position="198"/>
    </location>
    <ligand>
        <name>1D-myo-inositol 6-phosphate</name>
        <dbReference type="ChEBI" id="CHEBI:64841"/>
    </ligand>
</feature>
<feature type="binding site" evidence="11 14">
    <location>
        <position position="200"/>
    </location>
    <ligand>
        <name>1D-myo-inositol 6-phosphate</name>
        <dbReference type="ChEBI" id="CHEBI:64841"/>
    </ligand>
</feature>
<feature type="binding site" evidence="1">
    <location>
        <position position="213"/>
    </location>
    <ligand>
        <name>ATP</name>
        <dbReference type="ChEBI" id="CHEBI:30616"/>
    </ligand>
</feature>
<feature type="binding site" evidence="11 14">
    <location>
        <position position="280"/>
    </location>
    <ligand>
        <name>1D-myo-inositol 6-phosphate</name>
        <dbReference type="ChEBI" id="CHEBI:64841"/>
    </ligand>
</feature>
<feature type="binding site" evidence="1">
    <location>
        <position position="282"/>
    </location>
    <ligand>
        <name>Mg(2+)</name>
        <dbReference type="ChEBI" id="CHEBI:18420"/>
        <label>1</label>
    </ligand>
</feature>
<feature type="binding site" evidence="2">
    <location>
        <position position="296"/>
    </location>
    <ligand>
        <name>ATP</name>
        <dbReference type="ChEBI" id="CHEBI:30616"/>
    </ligand>
</feature>
<feature type="binding site" evidence="2">
    <location>
        <position position="297"/>
    </location>
    <ligand>
        <name>ATP</name>
        <dbReference type="ChEBI" id="CHEBI:30616"/>
    </ligand>
</feature>
<feature type="binding site" evidence="1">
    <location>
        <position position="297"/>
    </location>
    <ligand>
        <name>Mg(2+)</name>
        <dbReference type="ChEBI" id="CHEBI:18420"/>
        <label>1</label>
    </ligand>
</feature>
<feature type="binding site" evidence="1">
    <location>
        <position position="297"/>
    </location>
    <ligand>
        <name>Mg(2+)</name>
        <dbReference type="ChEBI" id="CHEBI:18420"/>
        <label>2</label>
    </ligand>
</feature>
<feature type="binding site" evidence="2">
    <location>
        <position position="299"/>
    </location>
    <ligand>
        <name>1D-myo-inositol 6-phosphate</name>
        <dbReference type="ChEBI" id="CHEBI:64841"/>
    </ligand>
</feature>
<feature type="binding site" evidence="2">
    <location>
        <position position="299"/>
    </location>
    <ligand>
        <name>ATP</name>
        <dbReference type="ChEBI" id="CHEBI:30616"/>
    </ligand>
</feature>
<feature type="binding site" evidence="1">
    <location>
        <position position="299"/>
    </location>
    <ligand>
        <name>Mg(2+)</name>
        <dbReference type="ChEBI" id="CHEBI:18420"/>
        <label>2</label>
    </ligand>
</feature>
<feature type="binding site" evidence="11 14">
    <location>
        <position position="303"/>
    </location>
    <ligand>
        <name>1D-myo-inositol 6-phosphate</name>
        <dbReference type="ChEBI" id="CHEBI:64841"/>
    </ligand>
</feature>
<feature type="binding site" evidence="11 14">
    <location>
        <position position="306"/>
    </location>
    <ligand>
        <name>1D-myo-inositol 6-phosphate</name>
        <dbReference type="ChEBI" id="CHEBI:64841"/>
    </ligand>
</feature>
<feature type="mutagenesis site" description="Strongly reduced InsP6 kinase activity." evidence="6">
    <original>K</original>
    <variation>A</variation>
    <location>
        <position position="29"/>
    </location>
</feature>
<feature type="mutagenesis site" description="Strongly reduced InsP6 kinase activity." evidence="6">
    <original>S</original>
    <variation>A</variation>
    <location>
        <position position="32"/>
    </location>
</feature>
<feature type="mutagenesis site" description="Strongly reduced InsP6 kinase activity." evidence="6">
    <original>K</original>
    <variation>A</variation>
    <location>
        <position position="70"/>
    </location>
</feature>
<feature type="mutagenesis site" description="Strongly reduced InsP6 kinase activity." evidence="6">
    <original>F</original>
    <variation>A</variation>
    <location>
        <position position="189"/>
    </location>
</feature>
<feature type="mutagenesis site" description="Strongly reduced InsP6 kinase activity." evidence="6">
    <original>H</original>
    <variation>A</variation>
    <location>
        <position position="192"/>
    </location>
</feature>
<feature type="mutagenesis site" description="Strongly reduced InsP6 kinase activity." evidence="6">
    <original>K</original>
    <variation>A</variation>
    <location>
        <position position="198"/>
    </location>
</feature>
<feature type="mutagenesis site" description="Strongly reduced InsP6 kinase activity." evidence="6">
    <original>Y</original>
    <variation>A</variation>
    <location>
        <position position="200"/>
    </location>
</feature>
<feature type="mutagenesis site" description="Strongly reduced InsP6 kinase activity." evidence="6">
    <original>R</original>
    <variation>A</variation>
    <location>
        <position position="211"/>
    </location>
</feature>
<feature type="mutagenesis site" description="Strongly reduced InsP6 kinase activity and slightly reduced Ins(1,3,4,5,6)P5 phosphatase activity." evidence="6">
    <original>PEDDASAQGSVSFSQVSNLPTERTAEEYY</original>
    <variation>GSGSG</variation>
    <location>
        <begin position="219"/>
        <end position="247"/>
    </location>
</feature>
<feature type="mutagenesis site" description="Strongly reduced InsP6 kinase activity." evidence="6">
    <original>N</original>
    <variation>A</variation>
    <location>
        <position position="280"/>
    </location>
</feature>
<feature type="mutagenesis site" description="Strongly reduced InsP6 kinase activity." evidence="6">
    <original>K</original>
    <variation>A</variation>
    <location>
        <position position="306"/>
    </location>
</feature>
<feature type="sequence conflict" description="In Ref. 4; ACG37127." evidence="10" ref="4">
    <original>K</original>
    <variation>E</variation>
    <location>
        <position position="324"/>
    </location>
</feature>
<feature type="strand" evidence="15">
    <location>
        <begin position="19"/>
        <end position="25"/>
    </location>
</feature>
<feature type="helix" evidence="15">
    <location>
        <begin position="27"/>
        <end position="33"/>
    </location>
</feature>
<feature type="helix" evidence="15">
    <location>
        <begin position="36"/>
        <end position="43"/>
    </location>
</feature>
<feature type="turn" evidence="15">
    <location>
        <begin position="44"/>
        <end position="46"/>
    </location>
</feature>
<feature type="strand" evidence="15">
    <location>
        <begin position="47"/>
        <end position="51"/>
    </location>
</feature>
<feature type="helix" evidence="15">
    <location>
        <begin position="58"/>
        <end position="60"/>
    </location>
</feature>
<feature type="strand" evidence="15">
    <location>
        <begin position="65"/>
        <end position="70"/>
    </location>
</feature>
<feature type="helix" evidence="15">
    <location>
        <begin position="74"/>
        <end position="86"/>
    </location>
</feature>
<feature type="strand" evidence="15">
    <location>
        <begin position="92"/>
        <end position="94"/>
    </location>
</feature>
<feature type="helix" evidence="15">
    <location>
        <begin position="96"/>
        <end position="99"/>
    </location>
</feature>
<feature type="helix" evidence="15">
    <location>
        <begin position="100"/>
        <end position="102"/>
    </location>
</feature>
<feature type="helix" evidence="15">
    <location>
        <begin position="105"/>
        <end position="113"/>
    </location>
</feature>
<feature type="strand" evidence="15">
    <location>
        <begin position="123"/>
        <end position="126"/>
    </location>
</feature>
<feature type="strand" evidence="15">
    <location>
        <begin position="131"/>
        <end position="133"/>
    </location>
</feature>
<feature type="helix" evidence="15">
    <location>
        <begin position="136"/>
        <end position="141"/>
    </location>
</feature>
<feature type="helix" evidence="15">
    <location>
        <begin position="143"/>
        <end position="147"/>
    </location>
</feature>
<feature type="strand" evidence="15">
    <location>
        <begin position="150"/>
        <end position="158"/>
    </location>
</feature>
<feature type="strand" evidence="16">
    <location>
        <begin position="160"/>
        <end position="162"/>
    </location>
</feature>
<feature type="helix" evidence="15">
    <location>
        <begin position="164"/>
        <end position="166"/>
    </location>
</feature>
<feature type="strand" evidence="15">
    <location>
        <begin position="169"/>
        <end position="171"/>
    </location>
</feature>
<feature type="helix" evidence="15">
    <location>
        <begin position="174"/>
        <end position="177"/>
    </location>
</feature>
<feature type="strand" evidence="15">
    <location>
        <begin position="182"/>
        <end position="188"/>
    </location>
</feature>
<feature type="helix" evidence="16">
    <location>
        <begin position="190"/>
        <end position="192"/>
    </location>
</feature>
<feature type="strand" evidence="15">
    <location>
        <begin position="197"/>
        <end position="202"/>
    </location>
</feature>
<feature type="strand" evidence="15">
    <location>
        <begin position="205"/>
        <end position="209"/>
    </location>
</feature>
<feature type="strand" evidence="16">
    <location>
        <begin position="218"/>
        <end position="221"/>
    </location>
</feature>
<feature type="strand" evidence="16">
    <location>
        <begin position="226"/>
        <end position="230"/>
    </location>
</feature>
<feature type="helix" evidence="15">
    <location>
        <begin position="260"/>
        <end position="274"/>
    </location>
</feature>
<feature type="strand" evidence="15">
    <location>
        <begin position="277"/>
        <end position="285"/>
    </location>
</feature>
<feature type="turn" evidence="15">
    <location>
        <begin position="287"/>
        <end position="289"/>
    </location>
</feature>
<feature type="strand" evidence="15">
    <location>
        <begin position="290"/>
        <end position="301"/>
    </location>
</feature>
<feature type="helix" evidence="15">
    <location>
        <begin position="304"/>
        <end position="306"/>
    </location>
</feature>
<feature type="helix" evidence="15">
    <location>
        <begin position="310"/>
        <end position="322"/>
    </location>
</feature>